<dbReference type="EMBL" id="CP001615">
    <property type="protein sequence ID" value="ACQ69547.1"/>
    <property type="molecule type" value="Genomic_DNA"/>
</dbReference>
<dbReference type="RefSeq" id="WP_012726666.1">
    <property type="nucleotide sequence ID" value="NC_012673.1"/>
</dbReference>
<dbReference type="SMR" id="C4L425"/>
<dbReference type="STRING" id="360911.EAT1b_0616"/>
<dbReference type="KEGG" id="eat:EAT1b_0616"/>
<dbReference type="eggNOG" id="COG0443">
    <property type="taxonomic scope" value="Bacteria"/>
</dbReference>
<dbReference type="HOGENOM" id="CLU_005965_2_4_9"/>
<dbReference type="OrthoDB" id="9766019at2"/>
<dbReference type="Proteomes" id="UP000000716">
    <property type="component" value="Chromosome"/>
</dbReference>
<dbReference type="GO" id="GO:0005524">
    <property type="term" value="F:ATP binding"/>
    <property type="evidence" value="ECO:0007669"/>
    <property type="project" value="UniProtKB-UniRule"/>
</dbReference>
<dbReference type="GO" id="GO:0140662">
    <property type="term" value="F:ATP-dependent protein folding chaperone"/>
    <property type="evidence" value="ECO:0007669"/>
    <property type="project" value="InterPro"/>
</dbReference>
<dbReference type="GO" id="GO:0051082">
    <property type="term" value="F:unfolded protein binding"/>
    <property type="evidence" value="ECO:0007669"/>
    <property type="project" value="InterPro"/>
</dbReference>
<dbReference type="CDD" id="cd10234">
    <property type="entry name" value="ASKHA_NBD_HSP70_DnaK-like"/>
    <property type="match status" value="1"/>
</dbReference>
<dbReference type="FunFam" id="2.60.34.10:FF:000014">
    <property type="entry name" value="Chaperone protein DnaK HSP70"/>
    <property type="match status" value="1"/>
</dbReference>
<dbReference type="FunFam" id="1.20.1270.10:FF:000001">
    <property type="entry name" value="Molecular chaperone DnaK"/>
    <property type="match status" value="1"/>
</dbReference>
<dbReference type="FunFam" id="3.30.420.40:FF:000071">
    <property type="entry name" value="Molecular chaperone DnaK"/>
    <property type="match status" value="1"/>
</dbReference>
<dbReference type="FunFam" id="3.90.640.10:FF:000003">
    <property type="entry name" value="Molecular chaperone DnaK"/>
    <property type="match status" value="1"/>
</dbReference>
<dbReference type="Gene3D" id="1.20.1270.10">
    <property type="match status" value="1"/>
</dbReference>
<dbReference type="Gene3D" id="3.30.420.40">
    <property type="match status" value="2"/>
</dbReference>
<dbReference type="Gene3D" id="3.90.640.10">
    <property type="entry name" value="Actin, Chain A, domain 4"/>
    <property type="match status" value="1"/>
</dbReference>
<dbReference type="Gene3D" id="2.60.34.10">
    <property type="entry name" value="Substrate Binding Domain Of DNAk, Chain A, domain 1"/>
    <property type="match status" value="1"/>
</dbReference>
<dbReference type="HAMAP" id="MF_00332">
    <property type="entry name" value="DnaK"/>
    <property type="match status" value="1"/>
</dbReference>
<dbReference type="InterPro" id="IPR043129">
    <property type="entry name" value="ATPase_NBD"/>
</dbReference>
<dbReference type="InterPro" id="IPR012725">
    <property type="entry name" value="Chaperone_DnaK"/>
</dbReference>
<dbReference type="InterPro" id="IPR018181">
    <property type="entry name" value="Heat_shock_70_CS"/>
</dbReference>
<dbReference type="InterPro" id="IPR029048">
    <property type="entry name" value="HSP70_C_sf"/>
</dbReference>
<dbReference type="InterPro" id="IPR029047">
    <property type="entry name" value="HSP70_peptide-bd_sf"/>
</dbReference>
<dbReference type="InterPro" id="IPR013126">
    <property type="entry name" value="Hsp_70_fam"/>
</dbReference>
<dbReference type="NCBIfam" id="NF001413">
    <property type="entry name" value="PRK00290.1"/>
    <property type="match status" value="1"/>
</dbReference>
<dbReference type="NCBIfam" id="TIGR02350">
    <property type="entry name" value="prok_dnaK"/>
    <property type="match status" value="1"/>
</dbReference>
<dbReference type="PANTHER" id="PTHR19375">
    <property type="entry name" value="HEAT SHOCK PROTEIN 70KDA"/>
    <property type="match status" value="1"/>
</dbReference>
<dbReference type="Pfam" id="PF00012">
    <property type="entry name" value="HSP70"/>
    <property type="match status" value="1"/>
</dbReference>
<dbReference type="PRINTS" id="PR00301">
    <property type="entry name" value="HEATSHOCK70"/>
</dbReference>
<dbReference type="SUPFAM" id="SSF53067">
    <property type="entry name" value="Actin-like ATPase domain"/>
    <property type="match status" value="2"/>
</dbReference>
<dbReference type="SUPFAM" id="SSF100934">
    <property type="entry name" value="Heat shock protein 70kD (HSP70), C-terminal subdomain"/>
    <property type="match status" value="1"/>
</dbReference>
<dbReference type="SUPFAM" id="SSF100920">
    <property type="entry name" value="Heat shock protein 70kD (HSP70), peptide-binding domain"/>
    <property type="match status" value="1"/>
</dbReference>
<dbReference type="PROSITE" id="PS00297">
    <property type="entry name" value="HSP70_1"/>
    <property type="match status" value="1"/>
</dbReference>
<dbReference type="PROSITE" id="PS00329">
    <property type="entry name" value="HSP70_2"/>
    <property type="match status" value="1"/>
</dbReference>
<dbReference type="PROSITE" id="PS01036">
    <property type="entry name" value="HSP70_3"/>
    <property type="match status" value="1"/>
</dbReference>
<evidence type="ECO:0000255" key="1">
    <source>
        <dbReference type="HAMAP-Rule" id="MF_00332"/>
    </source>
</evidence>
<evidence type="ECO:0000256" key="2">
    <source>
        <dbReference type="SAM" id="MobiDB-lite"/>
    </source>
</evidence>
<keyword id="KW-0067">ATP-binding</keyword>
<keyword id="KW-0143">Chaperone</keyword>
<keyword id="KW-0547">Nucleotide-binding</keyword>
<keyword id="KW-0597">Phosphoprotein</keyword>
<keyword id="KW-0346">Stress response</keyword>
<proteinExistence type="inferred from homology"/>
<comment type="function">
    <text evidence="1">Acts as a chaperone.</text>
</comment>
<comment type="induction">
    <text evidence="1">By stress conditions e.g. heat shock.</text>
</comment>
<comment type="similarity">
    <text evidence="1">Belongs to the heat shock protein 70 family.</text>
</comment>
<name>DNAK_EXISA</name>
<reference key="1">
    <citation type="journal article" date="2011" name="J. Bacteriol.">
        <title>Complete genome sequence of the Thermophilic Bacterium Exiguobacterium sp. AT1b.</title>
        <authorList>
            <person name="Vishnivetskaya T.A."/>
            <person name="Lucas S."/>
            <person name="Copeland A."/>
            <person name="Lapidus A."/>
            <person name="Glavina del Rio T."/>
            <person name="Dalin E."/>
            <person name="Tice H."/>
            <person name="Bruce D.C."/>
            <person name="Goodwin L.A."/>
            <person name="Pitluck S."/>
            <person name="Saunders E."/>
            <person name="Brettin T."/>
            <person name="Detter C."/>
            <person name="Han C."/>
            <person name="Larimer F."/>
            <person name="Land M.L."/>
            <person name="Hauser L.J."/>
            <person name="Kyrpides N.C."/>
            <person name="Ovchinnikova G."/>
            <person name="Kathariou S."/>
            <person name="Ramaley R.F."/>
            <person name="Rodrigues D.F."/>
            <person name="Hendrix C."/>
            <person name="Richardson P."/>
            <person name="Tiedje J.M."/>
        </authorList>
    </citation>
    <scope>NUCLEOTIDE SEQUENCE [LARGE SCALE GENOMIC DNA]</scope>
    <source>
        <strain>ATCC BAA-1283 / AT1b</strain>
    </source>
</reference>
<gene>
    <name evidence="1" type="primary">dnaK</name>
    <name type="ordered locus">EAT1b_0616</name>
</gene>
<accession>C4L425</accession>
<feature type="chain" id="PRO_1000205188" description="Chaperone protein DnaK">
    <location>
        <begin position="1"/>
        <end position="608"/>
    </location>
</feature>
<feature type="region of interest" description="Disordered" evidence="2">
    <location>
        <begin position="490"/>
        <end position="509"/>
    </location>
</feature>
<feature type="region of interest" description="Disordered" evidence="2">
    <location>
        <begin position="576"/>
        <end position="608"/>
    </location>
</feature>
<feature type="compositionally biased region" description="Basic and acidic residues" evidence="2">
    <location>
        <begin position="490"/>
        <end position="508"/>
    </location>
</feature>
<feature type="compositionally biased region" description="Low complexity" evidence="2">
    <location>
        <begin position="576"/>
        <end position="587"/>
    </location>
</feature>
<feature type="compositionally biased region" description="Acidic residues" evidence="2">
    <location>
        <begin position="595"/>
        <end position="608"/>
    </location>
</feature>
<feature type="modified residue" description="Phosphothreonine; by autocatalysis" evidence="1">
    <location>
        <position position="172"/>
    </location>
</feature>
<sequence length="608" mass="65333">MGKIIGIDLGTTNSCVAVMEGGEAVVISNAEGNRTTPSVVAFKGEERQVGEVAKRQAITNPNTIQSIKRHMGTSHTVDVDGKKFTPQEISAIILQKLKKDAEDYLGESVTEAVITVPAYFNDAERQATKDAGKIAGLDVKRIINEPTAAALAYGLDKGEDHTILIYDLGGGTFDVSILELGDGVFEVVATAGDNRLGGDDFDQKVIDYLVAEFKKENGIDLGKDKMALQRLKDAAEKAKKDLSGVTSAHISLPFITAGEAGPLHLEMTLTRAKFEELTADLVERTMEPTRRALKDAGLTPSDLDKIILVGGSTRIPAVQKAIHDFTKKEPFKGVNPDEVVALGAAIQGGVLAGDVKDVVLLDVTPLSLGIETMGGVMTKLIDRNTTIPTSKSQVFSTAADNQPAVDIHVLQGERPMAPDNKTLGRFQLTDIPPAPRGVPQIEVKFDIDANGIVHVSAKDLGTNKEQSITIQSSSGIDEAEIERMVKEAEANAEADNKRKEEAELRNETDQLVFATDKAIKDLGEQVEEADKEKAEAAKEKAKTALEGSDLEAIRTAKDELSAVVQELTQKVYAKMAEQQGAEGAEPQAEAKQDDNVVDAEFEDLDDRK</sequence>
<organism>
    <name type="scientific">Exiguobacterium sp. (strain ATCC BAA-1283 / AT1b)</name>
    <dbReference type="NCBI Taxonomy" id="360911"/>
    <lineage>
        <taxon>Bacteria</taxon>
        <taxon>Bacillati</taxon>
        <taxon>Bacillota</taxon>
        <taxon>Bacilli</taxon>
        <taxon>Bacillales</taxon>
        <taxon>Bacillales Family XII. Incertae Sedis</taxon>
        <taxon>Exiguobacterium</taxon>
    </lineage>
</organism>
<protein>
    <recommendedName>
        <fullName evidence="1">Chaperone protein DnaK</fullName>
    </recommendedName>
    <alternativeName>
        <fullName evidence="1">HSP70</fullName>
    </alternativeName>
    <alternativeName>
        <fullName evidence="1">Heat shock 70 kDa protein</fullName>
    </alternativeName>
    <alternativeName>
        <fullName evidence="1">Heat shock protein 70</fullName>
    </alternativeName>
</protein>